<keyword id="KW-0997">Cell inner membrane</keyword>
<keyword id="KW-1003">Cell membrane</keyword>
<keyword id="KW-0378">Hydrolase</keyword>
<keyword id="KW-0472">Membrane</keyword>
<keyword id="KW-0479">Metal-binding</keyword>
<keyword id="KW-0482">Metalloprotease</keyword>
<keyword id="KW-0645">Protease</keyword>
<keyword id="KW-1185">Reference proteome</keyword>
<keyword id="KW-0812">Transmembrane</keyword>
<keyword id="KW-1133">Transmembrane helix</keyword>
<keyword id="KW-0862">Zinc</keyword>
<gene>
    <name evidence="1" type="primary">htpX</name>
    <name type="ordered locus">NE1421</name>
</gene>
<protein>
    <recommendedName>
        <fullName evidence="1">Protease HtpX homolog</fullName>
        <ecNumber evidence="1">3.4.24.-</ecNumber>
    </recommendedName>
</protein>
<comment type="cofactor">
    <cofactor evidence="1">
        <name>Zn(2+)</name>
        <dbReference type="ChEBI" id="CHEBI:29105"/>
    </cofactor>
    <text evidence="1">Binds 1 zinc ion per subunit.</text>
</comment>
<comment type="subcellular location">
    <subcellularLocation>
        <location evidence="1">Cell inner membrane</location>
        <topology evidence="1">Multi-pass membrane protein</topology>
    </subcellularLocation>
</comment>
<comment type="similarity">
    <text evidence="1">Belongs to the peptidase M48B family.</text>
</comment>
<feature type="chain" id="PRO_1000020899" description="Protease HtpX homolog">
    <location>
        <begin position="1"/>
        <end position="293"/>
    </location>
</feature>
<feature type="transmembrane region" description="Helical" evidence="1">
    <location>
        <begin position="5"/>
        <end position="25"/>
    </location>
</feature>
<feature type="transmembrane region" description="Helical" evidence="1">
    <location>
        <begin position="43"/>
        <end position="63"/>
    </location>
</feature>
<feature type="transmembrane region" description="Helical" evidence="1">
    <location>
        <begin position="159"/>
        <end position="179"/>
    </location>
</feature>
<feature type="transmembrane region" description="Helical" evidence="1">
    <location>
        <begin position="199"/>
        <end position="219"/>
    </location>
</feature>
<feature type="active site" evidence="1">
    <location>
        <position position="149"/>
    </location>
</feature>
<feature type="binding site" evidence="1">
    <location>
        <position position="148"/>
    </location>
    <ligand>
        <name>Zn(2+)</name>
        <dbReference type="ChEBI" id="CHEBI:29105"/>
        <note>catalytic</note>
    </ligand>
</feature>
<feature type="binding site" evidence="1">
    <location>
        <position position="152"/>
    </location>
    <ligand>
        <name>Zn(2+)</name>
        <dbReference type="ChEBI" id="CHEBI:29105"/>
        <note>catalytic</note>
    </ligand>
</feature>
<feature type="binding site" evidence="1">
    <location>
        <position position="225"/>
    </location>
    <ligand>
        <name>Zn(2+)</name>
        <dbReference type="ChEBI" id="CHEBI:29105"/>
        <note>catalytic</note>
    </ligand>
</feature>
<sequence>MMKRIFLFIVTNLAILLMLSITLRLLGVDRILDAEGSELNFNALLVFSAVLGFGGSLISLAMSKWSAKHMTGAMVIDVPSNSTEGWLVETVRRQAKAAGIGMPEVAIYDSPDINAFATGMNRNNALVAVSTGLLQKMNRDEAEAVLAHEVSHVANGDMVTLALIQGVVNTFVIFLSRIIGHIVDRAVFKSEEGHGPAYFVTSLIAQMVLGILATIIVMWFSRQREFRADAGSAQISGRNKMVAALRRLQQEYEPSHLPDKIAAFGISGQKSQIGRLFMSHPPLEERIQALQSA</sequence>
<proteinExistence type="inferred from homology"/>
<reference key="1">
    <citation type="journal article" date="2003" name="J. Bacteriol.">
        <title>Complete genome sequence of the ammonia-oxidizing bacterium and obligate chemolithoautotroph Nitrosomonas europaea.</title>
        <authorList>
            <person name="Chain P."/>
            <person name="Lamerdin J.E."/>
            <person name="Larimer F.W."/>
            <person name="Regala W."/>
            <person name="Lao V."/>
            <person name="Land M.L."/>
            <person name="Hauser L."/>
            <person name="Hooper A.B."/>
            <person name="Klotz M.G."/>
            <person name="Norton J."/>
            <person name="Sayavedra-Soto L.A."/>
            <person name="Arciero D.M."/>
            <person name="Hommes N.G."/>
            <person name="Whittaker M.M."/>
            <person name="Arp D.J."/>
        </authorList>
    </citation>
    <scope>NUCLEOTIDE SEQUENCE [LARGE SCALE GENOMIC DNA]</scope>
    <source>
        <strain>ATCC 19718 / CIP 103999 / KCTC 2705 / NBRC 14298</strain>
    </source>
</reference>
<organism>
    <name type="scientific">Nitrosomonas europaea (strain ATCC 19718 / CIP 103999 / KCTC 2705 / NBRC 14298)</name>
    <dbReference type="NCBI Taxonomy" id="228410"/>
    <lineage>
        <taxon>Bacteria</taxon>
        <taxon>Pseudomonadati</taxon>
        <taxon>Pseudomonadota</taxon>
        <taxon>Betaproteobacteria</taxon>
        <taxon>Nitrosomonadales</taxon>
        <taxon>Nitrosomonadaceae</taxon>
        <taxon>Nitrosomonas</taxon>
    </lineage>
</organism>
<name>HTPX_NITEU</name>
<accession>Q82UR0</accession>
<evidence type="ECO:0000255" key="1">
    <source>
        <dbReference type="HAMAP-Rule" id="MF_00188"/>
    </source>
</evidence>
<dbReference type="EC" id="3.4.24.-" evidence="1"/>
<dbReference type="EMBL" id="AL954747">
    <property type="protein sequence ID" value="CAD85332.1"/>
    <property type="molecule type" value="Genomic_DNA"/>
</dbReference>
<dbReference type="SMR" id="Q82UR0"/>
<dbReference type="STRING" id="228410.NE1421"/>
<dbReference type="MEROPS" id="M48.002"/>
<dbReference type="KEGG" id="neu:NE1421"/>
<dbReference type="eggNOG" id="COG0501">
    <property type="taxonomic scope" value="Bacteria"/>
</dbReference>
<dbReference type="HOGENOM" id="CLU_042266_1_0_4"/>
<dbReference type="PhylomeDB" id="Q82UR0"/>
<dbReference type="Proteomes" id="UP000001416">
    <property type="component" value="Chromosome"/>
</dbReference>
<dbReference type="GO" id="GO:0005886">
    <property type="term" value="C:plasma membrane"/>
    <property type="evidence" value="ECO:0007669"/>
    <property type="project" value="UniProtKB-SubCell"/>
</dbReference>
<dbReference type="GO" id="GO:0004222">
    <property type="term" value="F:metalloendopeptidase activity"/>
    <property type="evidence" value="ECO:0007669"/>
    <property type="project" value="UniProtKB-UniRule"/>
</dbReference>
<dbReference type="GO" id="GO:0008270">
    <property type="term" value="F:zinc ion binding"/>
    <property type="evidence" value="ECO:0007669"/>
    <property type="project" value="UniProtKB-UniRule"/>
</dbReference>
<dbReference type="GO" id="GO:0006508">
    <property type="term" value="P:proteolysis"/>
    <property type="evidence" value="ECO:0007669"/>
    <property type="project" value="UniProtKB-KW"/>
</dbReference>
<dbReference type="CDD" id="cd07335">
    <property type="entry name" value="M48B_HtpX_like"/>
    <property type="match status" value="1"/>
</dbReference>
<dbReference type="Gene3D" id="3.30.2010.10">
    <property type="entry name" value="Metalloproteases ('zincins'), catalytic domain"/>
    <property type="match status" value="1"/>
</dbReference>
<dbReference type="HAMAP" id="MF_00188">
    <property type="entry name" value="Pept_M48_protease_HtpX"/>
    <property type="match status" value="1"/>
</dbReference>
<dbReference type="InterPro" id="IPR050083">
    <property type="entry name" value="HtpX_protease"/>
</dbReference>
<dbReference type="InterPro" id="IPR022919">
    <property type="entry name" value="Pept_M48_protease_HtpX"/>
</dbReference>
<dbReference type="InterPro" id="IPR001915">
    <property type="entry name" value="Peptidase_M48"/>
</dbReference>
<dbReference type="NCBIfam" id="NF003965">
    <property type="entry name" value="PRK05457.1"/>
    <property type="match status" value="1"/>
</dbReference>
<dbReference type="PANTHER" id="PTHR43221">
    <property type="entry name" value="PROTEASE HTPX"/>
    <property type="match status" value="1"/>
</dbReference>
<dbReference type="PANTHER" id="PTHR43221:SF1">
    <property type="entry name" value="PROTEASE HTPX"/>
    <property type="match status" value="1"/>
</dbReference>
<dbReference type="Pfam" id="PF01435">
    <property type="entry name" value="Peptidase_M48"/>
    <property type="match status" value="1"/>
</dbReference>